<dbReference type="EMBL" id="CP000724">
    <property type="protein sequence ID" value="ABR48941.1"/>
    <property type="status" value="ALT_INIT"/>
    <property type="molecule type" value="Genomic_DNA"/>
</dbReference>
<dbReference type="RefSeq" id="WP_041720835.1">
    <property type="nucleotide sequence ID" value="NC_009633.1"/>
</dbReference>
<dbReference type="SMR" id="A6TRX3"/>
<dbReference type="STRING" id="293826.Amet_2791"/>
<dbReference type="KEGG" id="amt:Amet_2791"/>
<dbReference type="eggNOG" id="COG2052">
    <property type="taxonomic scope" value="Bacteria"/>
</dbReference>
<dbReference type="HOGENOM" id="CLU_165326_0_0_9"/>
<dbReference type="OrthoDB" id="5432174at2"/>
<dbReference type="Proteomes" id="UP000001572">
    <property type="component" value="Chromosome"/>
</dbReference>
<dbReference type="HAMAP" id="MF_01503">
    <property type="entry name" value="RemA"/>
    <property type="match status" value="1"/>
</dbReference>
<dbReference type="InterPro" id="IPR007169">
    <property type="entry name" value="RemA-like"/>
</dbReference>
<dbReference type="NCBIfam" id="NF046064">
    <property type="entry name" value="MtxBflmRegRemA"/>
    <property type="match status" value="1"/>
</dbReference>
<dbReference type="NCBIfam" id="NF003315">
    <property type="entry name" value="PRK04323.1"/>
    <property type="match status" value="1"/>
</dbReference>
<dbReference type="PANTHER" id="PTHR38449:SF1">
    <property type="entry name" value="REGULATORY PROTEIN SSL2874-RELATED"/>
    <property type="match status" value="1"/>
</dbReference>
<dbReference type="PANTHER" id="PTHR38449">
    <property type="entry name" value="REGULATORY PROTEIN TM_1690-RELATED"/>
    <property type="match status" value="1"/>
</dbReference>
<dbReference type="Pfam" id="PF04025">
    <property type="entry name" value="RemA-like"/>
    <property type="match status" value="1"/>
</dbReference>
<protein>
    <recommendedName>
        <fullName evidence="1">Putative regulatory protein Amet_2791</fullName>
    </recommendedName>
</protein>
<comment type="similarity">
    <text evidence="1">Belongs to the RemA family.</text>
</comment>
<comment type="sequence caution" evidence="2">
    <conflict type="erroneous initiation">
        <sequence resource="EMBL-CDS" id="ABR48941"/>
    </conflict>
</comment>
<evidence type="ECO:0000255" key="1">
    <source>
        <dbReference type="HAMAP-Rule" id="MF_01503"/>
    </source>
</evidence>
<evidence type="ECO:0000305" key="2"/>
<proteinExistence type="inferred from homology"/>
<sequence>MNIKLINIGFGNIVSASRIVAIVSPESAPIKRIIQEARERGMLIDATYGRRTRAVIVTDSDHIILSAVQPETVAHRLNSKDANKEVEASAEIE</sequence>
<reference key="1">
    <citation type="journal article" date="2016" name="Genome Announc.">
        <title>Complete genome sequence of Alkaliphilus metalliredigens strain QYMF, an alkaliphilic and metal-reducing bacterium isolated from borax-contaminated leachate ponds.</title>
        <authorList>
            <person name="Hwang C."/>
            <person name="Copeland A."/>
            <person name="Lucas S."/>
            <person name="Lapidus A."/>
            <person name="Barry K."/>
            <person name="Detter J.C."/>
            <person name="Glavina Del Rio T."/>
            <person name="Hammon N."/>
            <person name="Israni S."/>
            <person name="Dalin E."/>
            <person name="Tice H."/>
            <person name="Pitluck S."/>
            <person name="Chertkov O."/>
            <person name="Brettin T."/>
            <person name="Bruce D."/>
            <person name="Han C."/>
            <person name="Schmutz J."/>
            <person name="Larimer F."/>
            <person name="Land M.L."/>
            <person name="Hauser L."/>
            <person name="Kyrpides N."/>
            <person name="Mikhailova N."/>
            <person name="Ye Q."/>
            <person name="Zhou J."/>
            <person name="Richardson P."/>
            <person name="Fields M.W."/>
        </authorList>
    </citation>
    <scope>NUCLEOTIDE SEQUENCE [LARGE SCALE GENOMIC DNA]</scope>
    <source>
        <strain>QYMF</strain>
    </source>
</reference>
<organism>
    <name type="scientific">Alkaliphilus metalliredigens (strain QYMF)</name>
    <dbReference type="NCBI Taxonomy" id="293826"/>
    <lineage>
        <taxon>Bacteria</taxon>
        <taxon>Bacillati</taxon>
        <taxon>Bacillota</taxon>
        <taxon>Clostridia</taxon>
        <taxon>Peptostreptococcales</taxon>
        <taxon>Natronincolaceae</taxon>
        <taxon>Alkaliphilus</taxon>
    </lineage>
</organism>
<gene>
    <name type="ordered locus">Amet_2791</name>
</gene>
<feature type="chain" id="PRO_0000318535" description="Putative regulatory protein Amet_2791">
    <location>
        <begin position="1"/>
        <end position="93"/>
    </location>
</feature>
<keyword id="KW-1185">Reference proteome</keyword>
<accession>A6TRX3</accession>
<name>Y2791_ALKMQ</name>